<sequence>MVKIAHIHMSGCTGCLISLTDTYEKLLDILGSVELVYALTLTGEKTEITETDDKILIERDIPGGIDIALVEGSVCLDDHHSMDDILTTRKNSKKSLVALGACAASGGVTRFRRVGQMSQPSHASFVPIGDVIKVDLALPGCPPSTESIVKLLTAALEGDMEYLEPFAEIAKYGKDACGCDVIKEVINKSLCMGCGTCAAACQVNAIDMVEAKPNINSEFCIKCGICSAQCPRVRFPEIIRKLE</sequence>
<feature type="chain" id="PRO_0000159234" description="Coenzyme F420 hydrogenase subunit gamma">
    <location>
        <begin position="1"/>
        <end position="243"/>
    </location>
</feature>
<feature type="domain" description="4Fe-4S ferredoxin-type 1" evidence="2">
    <location>
        <begin position="182"/>
        <end position="210"/>
    </location>
</feature>
<feature type="domain" description="4Fe-4S ferredoxin-type 2" evidence="2">
    <location>
        <begin position="211"/>
        <end position="241"/>
    </location>
</feature>
<feature type="binding site" evidence="1">
    <location>
        <position position="191"/>
    </location>
    <ligand>
        <name>[4Fe-4S] cluster</name>
        <dbReference type="ChEBI" id="CHEBI:49883"/>
        <label>1</label>
    </ligand>
</feature>
<feature type="binding site" evidence="1">
    <location>
        <position position="194"/>
    </location>
    <ligand>
        <name>[4Fe-4S] cluster</name>
        <dbReference type="ChEBI" id="CHEBI:49883"/>
        <label>1</label>
    </ligand>
</feature>
<feature type="binding site" evidence="1">
    <location>
        <position position="197"/>
    </location>
    <ligand>
        <name>[4Fe-4S] cluster</name>
        <dbReference type="ChEBI" id="CHEBI:49883"/>
        <label>1</label>
    </ligand>
</feature>
<feature type="binding site" evidence="1">
    <location>
        <position position="201"/>
    </location>
    <ligand>
        <name>[4Fe-4S] cluster</name>
        <dbReference type="ChEBI" id="CHEBI:49883"/>
        <label>2</label>
    </ligand>
</feature>
<feature type="binding site" evidence="1">
    <location>
        <position position="220"/>
    </location>
    <ligand>
        <name>[4Fe-4S] cluster</name>
        <dbReference type="ChEBI" id="CHEBI:49883"/>
        <label>2</label>
    </ligand>
</feature>
<feature type="binding site" evidence="1">
    <location>
        <position position="223"/>
    </location>
    <ligand>
        <name>[4Fe-4S] cluster</name>
        <dbReference type="ChEBI" id="CHEBI:49883"/>
        <label>2</label>
    </ligand>
</feature>
<feature type="binding site" evidence="1">
    <location>
        <position position="226"/>
    </location>
    <ligand>
        <name>[4Fe-4S] cluster</name>
        <dbReference type="ChEBI" id="CHEBI:49883"/>
        <label>2</label>
    </ligand>
</feature>
<feature type="binding site" evidence="1">
    <location>
        <position position="230"/>
    </location>
    <ligand>
        <name>[4Fe-4S] cluster</name>
        <dbReference type="ChEBI" id="CHEBI:49883"/>
        <label>1</label>
    </ligand>
</feature>
<gene>
    <name type="primary">frhG</name>
    <name type="synonym">frcG</name>
</gene>
<comment type="function">
    <text>Reduces the physiological low-potential two-electron acceptor coenzyme F420, and the artificial one-electron acceptor methylviologen.</text>
</comment>
<comment type="catalytic activity">
    <reaction>
        <text>oxidized coenzyme F420-(gamma-L-Glu)(n) + H2 + H(+) = reduced coenzyme F420-(gamma-L-Glu)(n)</text>
        <dbReference type="Rhea" id="RHEA:23760"/>
        <dbReference type="Rhea" id="RHEA-COMP:12939"/>
        <dbReference type="Rhea" id="RHEA-COMP:14378"/>
        <dbReference type="ChEBI" id="CHEBI:15378"/>
        <dbReference type="ChEBI" id="CHEBI:18276"/>
        <dbReference type="ChEBI" id="CHEBI:133980"/>
        <dbReference type="ChEBI" id="CHEBI:139511"/>
        <dbReference type="EC" id="1.12.98.1"/>
    </reaction>
</comment>
<comment type="cofactor">
    <cofactor>
        <name>Ni(2+)</name>
        <dbReference type="ChEBI" id="CHEBI:49786"/>
    </cofactor>
</comment>
<comment type="cofactor">
    <cofactor>
        <name>iron-sulfur cluster</name>
        <dbReference type="ChEBI" id="CHEBI:30408"/>
    </cofactor>
</comment>
<comment type="cofactor">
    <cofactor>
        <name>FAD</name>
        <dbReference type="ChEBI" id="CHEBI:57692"/>
    </cofactor>
</comment>
<comment type="subunit">
    <text>Complex of alpha, beta and gamma subunits.</text>
</comment>
<comment type="similarity">
    <text evidence="3">Belongs to the FrhG family.</text>
</comment>
<evidence type="ECO:0000250" key="1"/>
<evidence type="ECO:0000255" key="2">
    <source>
        <dbReference type="PROSITE-ProRule" id="PRU00711"/>
    </source>
</evidence>
<evidence type="ECO:0000305" key="3"/>
<accession>Q00393</accession>
<reference key="1">
    <citation type="journal article" date="1992" name="Mol. Gen. Genet.">
        <title>Methanococcus voltae harbors four gene clusters potentially encoding two [NiFe] and two [NiFeSe] hydrogenases, each of the cofactor F420-reducing or F420-non-reducing types.</title>
        <authorList>
            <person name="Halboth S."/>
            <person name="Klein A."/>
        </authorList>
    </citation>
    <scope>NUCLEOTIDE SEQUENCE [GENOMIC DNA]</scope>
    <source>
        <strain>ATCC 33273 / DSM 1537 / NBRC 100457 / OCM 70 / PS</strain>
    </source>
</reference>
<dbReference type="EC" id="1.12.98.1"/>
<dbReference type="EMBL" id="X61201">
    <property type="protein sequence ID" value="CAA43498.1"/>
    <property type="molecule type" value="Genomic_DNA"/>
</dbReference>
<dbReference type="PIR" id="S16723">
    <property type="entry name" value="S16723"/>
</dbReference>
<dbReference type="SMR" id="Q00393"/>
<dbReference type="GO" id="GO:0051539">
    <property type="term" value="F:4 iron, 4 sulfur cluster binding"/>
    <property type="evidence" value="ECO:0007669"/>
    <property type="project" value="UniProtKB-KW"/>
</dbReference>
<dbReference type="GO" id="GO:0050454">
    <property type="term" value="F:coenzyme F420 hydrogenase activity"/>
    <property type="evidence" value="ECO:0007669"/>
    <property type="project" value="UniProtKB-EC"/>
</dbReference>
<dbReference type="GO" id="GO:0050660">
    <property type="term" value="F:flavin adenine dinucleotide binding"/>
    <property type="evidence" value="ECO:0007669"/>
    <property type="project" value="InterPro"/>
</dbReference>
<dbReference type="GO" id="GO:0016151">
    <property type="term" value="F:nickel cation binding"/>
    <property type="evidence" value="ECO:0007669"/>
    <property type="project" value="InterPro"/>
</dbReference>
<dbReference type="Gene3D" id="3.30.70.20">
    <property type="match status" value="1"/>
</dbReference>
<dbReference type="Gene3D" id="3.40.50.700">
    <property type="entry name" value="NADH:ubiquinone oxidoreductase-like, 20kDa subunit"/>
    <property type="match status" value="1"/>
</dbReference>
<dbReference type="InterPro" id="IPR017896">
    <property type="entry name" value="4Fe4S_Fe-S-bd"/>
</dbReference>
<dbReference type="InterPro" id="IPR017900">
    <property type="entry name" value="4Fe4S_Fe_S_CS"/>
</dbReference>
<dbReference type="InterPro" id="IPR017681">
    <property type="entry name" value="Coenz_F420_hydrogenase_gsu"/>
</dbReference>
<dbReference type="InterPro" id="IPR051349">
    <property type="entry name" value="Hydrogenase_assoc-protein"/>
</dbReference>
<dbReference type="InterPro" id="IPR006137">
    <property type="entry name" value="NADH_UbQ_OxRdtase-like_20kDa"/>
</dbReference>
<dbReference type="InterPro" id="IPR037024">
    <property type="entry name" value="NiFe_Hase_small_N_sf"/>
</dbReference>
<dbReference type="NCBIfam" id="TIGR03294">
    <property type="entry name" value="FrhG"/>
    <property type="match status" value="1"/>
</dbReference>
<dbReference type="PANTHER" id="PTHR42845">
    <property type="entry name" value="COENZYME F420-REDUCING HYDROGENASE, GAMMA SUBUNIT"/>
    <property type="match status" value="1"/>
</dbReference>
<dbReference type="PANTHER" id="PTHR42845:SF2">
    <property type="entry name" value="F420-NON-REDUCING HYDROGENASE VHU SUBUNIT G"/>
    <property type="match status" value="1"/>
</dbReference>
<dbReference type="Pfam" id="PF13237">
    <property type="entry name" value="Fer4_10"/>
    <property type="match status" value="1"/>
</dbReference>
<dbReference type="Pfam" id="PF01058">
    <property type="entry name" value="Oxidored_q6"/>
    <property type="match status" value="1"/>
</dbReference>
<dbReference type="SUPFAM" id="SSF56770">
    <property type="entry name" value="HydA/Nqo6-like"/>
    <property type="match status" value="1"/>
</dbReference>
<dbReference type="PROSITE" id="PS00198">
    <property type="entry name" value="4FE4S_FER_1"/>
    <property type="match status" value="1"/>
</dbReference>
<dbReference type="PROSITE" id="PS51379">
    <property type="entry name" value="4FE4S_FER_2"/>
    <property type="match status" value="2"/>
</dbReference>
<proteinExistence type="inferred from homology"/>
<organism>
    <name type="scientific">Methanococcus voltae</name>
    <dbReference type="NCBI Taxonomy" id="2188"/>
    <lineage>
        <taxon>Archaea</taxon>
        <taxon>Methanobacteriati</taxon>
        <taxon>Methanobacteriota</taxon>
        <taxon>Methanomada group</taxon>
        <taxon>Methanococci</taxon>
        <taxon>Methanococcales</taxon>
        <taxon>Methanococcaceae</taxon>
        <taxon>Methanococcus</taxon>
    </lineage>
</organism>
<protein>
    <recommendedName>
        <fullName>Coenzyme F420 hydrogenase subunit gamma</fullName>
        <ecNumber>1.12.98.1</ecNumber>
    </recommendedName>
    <alternativeName>
        <fullName>8-hydroxy-5-deazaflavin-reducing hydrogenase subunit gamma</fullName>
        <shortName>FRH</shortName>
    </alternativeName>
</protein>
<keyword id="KW-0004">4Fe-4S</keyword>
<keyword id="KW-0249">Electron transport</keyword>
<keyword id="KW-0408">Iron</keyword>
<keyword id="KW-0411">Iron-sulfur</keyword>
<keyword id="KW-0479">Metal-binding</keyword>
<keyword id="KW-0560">Oxidoreductase</keyword>
<keyword id="KW-0677">Repeat</keyword>
<keyword id="KW-0813">Transport</keyword>
<name>FRHG_METVO</name>